<name>YFHK_BACSU</name>
<evidence type="ECO:0000255" key="1"/>
<evidence type="ECO:0000255" key="2">
    <source>
        <dbReference type="PROSITE-ProRule" id="PRU01117"/>
    </source>
</evidence>
<reference key="1">
    <citation type="journal article" date="1996" name="DNA Res.">
        <title>Cloning and sequencing of a 27.8-kb nucleotide sequence of the 79 degrees-81 degrees region of the Bacillus subtilis genome containing the sspE locus.</title>
        <authorList>
            <person name="Yamamoto H."/>
            <person name="Uchiyama S."/>
            <person name="Sekiguchi J."/>
        </authorList>
    </citation>
    <scope>NUCLEOTIDE SEQUENCE [GENOMIC DNA]</scope>
</reference>
<reference key="2">
    <citation type="journal article" date="1997" name="Nature">
        <title>The complete genome sequence of the Gram-positive bacterium Bacillus subtilis.</title>
        <authorList>
            <person name="Kunst F."/>
            <person name="Ogasawara N."/>
            <person name="Moszer I."/>
            <person name="Albertini A.M."/>
            <person name="Alloni G."/>
            <person name="Azevedo V."/>
            <person name="Bertero M.G."/>
            <person name="Bessieres P."/>
            <person name="Bolotin A."/>
            <person name="Borchert S."/>
            <person name="Borriss R."/>
            <person name="Boursier L."/>
            <person name="Brans A."/>
            <person name="Braun M."/>
            <person name="Brignell S.C."/>
            <person name="Bron S."/>
            <person name="Brouillet S."/>
            <person name="Bruschi C.V."/>
            <person name="Caldwell B."/>
            <person name="Capuano V."/>
            <person name="Carter N.M."/>
            <person name="Choi S.-K."/>
            <person name="Codani J.-J."/>
            <person name="Connerton I.F."/>
            <person name="Cummings N.J."/>
            <person name="Daniel R.A."/>
            <person name="Denizot F."/>
            <person name="Devine K.M."/>
            <person name="Duesterhoeft A."/>
            <person name="Ehrlich S.D."/>
            <person name="Emmerson P.T."/>
            <person name="Entian K.-D."/>
            <person name="Errington J."/>
            <person name="Fabret C."/>
            <person name="Ferrari E."/>
            <person name="Foulger D."/>
            <person name="Fritz C."/>
            <person name="Fujita M."/>
            <person name="Fujita Y."/>
            <person name="Fuma S."/>
            <person name="Galizzi A."/>
            <person name="Galleron N."/>
            <person name="Ghim S.-Y."/>
            <person name="Glaser P."/>
            <person name="Goffeau A."/>
            <person name="Golightly E.J."/>
            <person name="Grandi G."/>
            <person name="Guiseppi G."/>
            <person name="Guy B.J."/>
            <person name="Haga K."/>
            <person name="Haiech J."/>
            <person name="Harwood C.R."/>
            <person name="Henaut A."/>
            <person name="Hilbert H."/>
            <person name="Holsappel S."/>
            <person name="Hosono S."/>
            <person name="Hullo M.-F."/>
            <person name="Itaya M."/>
            <person name="Jones L.-M."/>
            <person name="Joris B."/>
            <person name="Karamata D."/>
            <person name="Kasahara Y."/>
            <person name="Klaerr-Blanchard M."/>
            <person name="Klein C."/>
            <person name="Kobayashi Y."/>
            <person name="Koetter P."/>
            <person name="Koningstein G."/>
            <person name="Krogh S."/>
            <person name="Kumano M."/>
            <person name="Kurita K."/>
            <person name="Lapidus A."/>
            <person name="Lardinois S."/>
            <person name="Lauber J."/>
            <person name="Lazarevic V."/>
            <person name="Lee S.-M."/>
            <person name="Levine A."/>
            <person name="Liu H."/>
            <person name="Masuda S."/>
            <person name="Mauel C."/>
            <person name="Medigue C."/>
            <person name="Medina N."/>
            <person name="Mellado R.P."/>
            <person name="Mizuno M."/>
            <person name="Moestl D."/>
            <person name="Nakai S."/>
            <person name="Noback M."/>
            <person name="Noone D."/>
            <person name="O'Reilly M."/>
            <person name="Ogawa K."/>
            <person name="Ogiwara A."/>
            <person name="Oudega B."/>
            <person name="Park S.-H."/>
            <person name="Parro V."/>
            <person name="Pohl T.M."/>
            <person name="Portetelle D."/>
            <person name="Porwollik S."/>
            <person name="Prescott A.M."/>
            <person name="Presecan E."/>
            <person name="Pujic P."/>
            <person name="Purnelle B."/>
            <person name="Rapoport G."/>
            <person name="Rey M."/>
            <person name="Reynolds S."/>
            <person name="Rieger M."/>
            <person name="Rivolta C."/>
            <person name="Rocha E."/>
            <person name="Roche B."/>
            <person name="Rose M."/>
            <person name="Sadaie Y."/>
            <person name="Sato T."/>
            <person name="Scanlan E."/>
            <person name="Schleich S."/>
            <person name="Schroeter R."/>
            <person name="Scoffone F."/>
            <person name="Sekiguchi J."/>
            <person name="Sekowska A."/>
            <person name="Seror S.J."/>
            <person name="Serror P."/>
            <person name="Shin B.-S."/>
            <person name="Soldo B."/>
            <person name="Sorokin A."/>
            <person name="Tacconi E."/>
            <person name="Takagi T."/>
            <person name="Takahashi H."/>
            <person name="Takemaru K."/>
            <person name="Takeuchi M."/>
            <person name="Tamakoshi A."/>
            <person name="Tanaka T."/>
            <person name="Terpstra P."/>
            <person name="Tognoni A."/>
            <person name="Tosato V."/>
            <person name="Uchiyama S."/>
            <person name="Vandenbol M."/>
            <person name="Vannier F."/>
            <person name="Vassarotti A."/>
            <person name="Viari A."/>
            <person name="Wambutt R."/>
            <person name="Wedler E."/>
            <person name="Wedler H."/>
            <person name="Weitzenegger T."/>
            <person name="Winters P."/>
            <person name="Wipat A."/>
            <person name="Yamamoto H."/>
            <person name="Yamane K."/>
            <person name="Yasumoto K."/>
            <person name="Yata K."/>
            <person name="Yoshida K."/>
            <person name="Yoshikawa H.-F."/>
            <person name="Zumstein E."/>
            <person name="Yoshikawa H."/>
            <person name="Danchin A."/>
        </authorList>
    </citation>
    <scope>NUCLEOTIDE SEQUENCE [LARGE SCALE GENOMIC DNA]</scope>
    <source>
        <strain>168</strain>
    </source>
</reference>
<organism>
    <name type="scientific">Bacillus subtilis (strain 168)</name>
    <dbReference type="NCBI Taxonomy" id="224308"/>
    <lineage>
        <taxon>Bacteria</taxon>
        <taxon>Bacillati</taxon>
        <taxon>Bacillota</taxon>
        <taxon>Bacilli</taxon>
        <taxon>Bacillales</taxon>
        <taxon>Bacillaceae</taxon>
        <taxon>Bacillus</taxon>
    </lineage>
</organism>
<protein>
    <recommendedName>
        <fullName>Uncharacterized protein YfhK</fullName>
    </recommendedName>
</protein>
<dbReference type="EMBL" id="D85082">
    <property type="protein sequence ID" value="BAA24477.1"/>
    <property type="molecule type" value="Genomic_DNA"/>
</dbReference>
<dbReference type="EMBL" id="AL009126">
    <property type="protein sequence ID" value="CAB12685.1"/>
    <property type="molecule type" value="Genomic_DNA"/>
</dbReference>
<dbReference type="PIR" id="D69801">
    <property type="entry name" value="D69801"/>
</dbReference>
<dbReference type="RefSeq" id="NP_388737.1">
    <property type="nucleotide sequence ID" value="NC_000964.3"/>
</dbReference>
<dbReference type="RefSeq" id="WP_003243363.1">
    <property type="nucleotide sequence ID" value="NZ_OZ025638.1"/>
</dbReference>
<dbReference type="SMR" id="O31579"/>
<dbReference type="FunCoup" id="O31579">
    <property type="interactions" value="57"/>
</dbReference>
<dbReference type="STRING" id="224308.BSU08570"/>
<dbReference type="PaxDb" id="224308-BSU08570"/>
<dbReference type="EnsemblBacteria" id="CAB12685">
    <property type="protein sequence ID" value="CAB12685"/>
    <property type="gene ID" value="BSU_08570"/>
</dbReference>
<dbReference type="GeneID" id="939215"/>
<dbReference type="KEGG" id="bsu:BSU08570"/>
<dbReference type="PATRIC" id="fig|224308.179.peg.925"/>
<dbReference type="eggNOG" id="COG3103">
    <property type="taxonomic scope" value="Bacteria"/>
</dbReference>
<dbReference type="InParanoid" id="O31579"/>
<dbReference type="OrthoDB" id="2455924at2"/>
<dbReference type="BioCyc" id="BSUB:BSU08570-MONOMER"/>
<dbReference type="Proteomes" id="UP000001570">
    <property type="component" value="Chromosome"/>
</dbReference>
<dbReference type="Gene3D" id="2.30.30.40">
    <property type="entry name" value="SH3 Domains"/>
    <property type="match status" value="2"/>
</dbReference>
<dbReference type="InterPro" id="IPR052354">
    <property type="entry name" value="Cell_Wall_Dynamics_Protein"/>
</dbReference>
<dbReference type="InterPro" id="IPR003646">
    <property type="entry name" value="SH3-like_bac-type"/>
</dbReference>
<dbReference type="PANTHER" id="PTHR34408:SF2">
    <property type="entry name" value="CELL WALL-BINDING PROTEIN YWSB"/>
    <property type="match status" value="1"/>
</dbReference>
<dbReference type="PANTHER" id="PTHR34408">
    <property type="entry name" value="FAMILY PROTEIN, PUTATIVE-RELATED"/>
    <property type="match status" value="1"/>
</dbReference>
<dbReference type="Pfam" id="PF08239">
    <property type="entry name" value="SH3_3"/>
    <property type="match status" value="1"/>
</dbReference>
<dbReference type="SMART" id="SM00287">
    <property type="entry name" value="SH3b"/>
    <property type="match status" value="2"/>
</dbReference>
<dbReference type="PROSITE" id="PS51781">
    <property type="entry name" value="SH3B"/>
    <property type="match status" value="2"/>
</dbReference>
<keyword id="KW-1185">Reference proteome</keyword>
<keyword id="KW-0732">Signal</keyword>
<sequence>MKKKQVMLALTAAAGLGLTALHSAPAAKAAPLHDISVSMPSSDTYIIKAGKLNVRTEPNHEGDILGTVSSEQKVKVDRFVNADWAQIHFKGKKAYISTHFLMKTASQAKTTKQTAFYTPTPENGKAKQLSSGTEVTILGWGFSENGGFDFTWAFVDYGGVKGYIHTKDLQMR</sequence>
<proteinExistence type="inferred from homology"/>
<gene>
    <name type="primary">yfhK</name>
    <name type="ordered locus">BSU08570</name>
</gene>
<feature type="signal peptide" evidence="1">
    <location>
        <begin position="1"/>
        <end position="29"/>
    </location>
</feature>
<feature type="chain" id="PRO_0000360562" description="Uncharacterized protein YfhK">
    <location>
        <begin position="30"/>
        <end position="172"/>
    </location>
</feature>
<feature type="domain" description="SH3b 1" evidence="2">
    <location>
        <begin position="42"/>
        <end position="105"/>
    </location>
</feature>
<feature type="domain" description="SH3b 2" evidence="2">
    <location>
        <begin position="112"/>
        <end position="172"/>
    </location>
</feature>
<accession>O31579</accession>
<accession>Q79EV7</accession>